<proteinExistence type="inferred from homology"/>
<keyword id="KW-0028">Amino-acid biosynthesis</keyword>
<keyword id="KW-0413">Isomerase</keyword>
<keyword id="KW-0486">Methionine biosynthesis</keyword>
<keyword id="KW-1185">Reference proteome</keyword>
<feature type="chain" id="PRO_0000156101" description="Methylthioribose-1-phosphate isomerase">
    <location>
        <begin position="1"/>
        <end position="354"/>
    </location>
</feature>
<feature type="active site" description="Proton donor" evidence="1">
    <location>
        <position position="245"/>
    </location>
</feature>
<feature type="binding site" evidence="1">
    <location>
        <begin position="58"/>
        <end position="60"/>
    </location>
    <ligand>
        <name>substrate</name>
    </ligand>
</feature>
<feature type="binding site" evidence="1">
    <location>
        <position position="101"/>
    </location>
    <ligand>
        <name>substrate</name>
    </ligand>
</feature>
<feature type="binding site" evidence="1">
    <location>
        <position position="204"/>
    </location>
    <ligand>
        <name>substrate</name>
    </ligand>
</feature>
<feature type="binding site" evidence="1">
    <location>
        <begin position="255"/>
        <end position="256"/>
    </location>
    <ligand>
        <name>substrate</name>
    </ligand>
</feature>
<feature type="site" description="Transition state stabilizer" evidence="1">
    <location>
        <position position="165"/>
    </location>
</feature>
<comment type="function">
    <text evidence="1">Catalyzes the interconversion of methylthioribose-1-phosphate (MTR-1-P) into methylthioribulose-1-phosphate (MTRu-1-P).</text>
</comment>
<comment type="catalytic activity">
    <reaction evidence="1">
        <text>5-(methylsulfanyl)-alpha-D-ribose 1-phosphate = 5-(methylsulfanyl)-D-ribulose 1-phosphate</text>
        <dbReference type="Rhea" id="RHEA:19989"/>
        <dbReference type="ChEBI" id="CHEBI:58533"/>
        <dbReference type="ChEBI" id="CHEBI:58548"/>
        <dbReference type="EC" id="5.3.1.23"/>
    </reaction>
</comment>
<comment type="pathway">
    <text evidence="1">Amino-acid biosynthesis; L-methionine biosynthesis via salvage pathway; L-methionine from S-methyl-5-thio-alpha-D-ribose 1-phosphate: step 1/6.</text>
</comment>
<comment type="similarity">
    <text evidence="2">Belongs to the eIF-2B alpha/beta/delta subunits family. MtnA subfamily.</text>
</comment>
<gene>
    <name evidence="1" type="primary">mtnA</name>
    <name type="ordered locus">PD_1936</name>
</gene>
<reference key="1">
    <citation type="journal article" date="2003" name="J. Bacteriol.">
        <title>Comparative analyses of the complete genome sequences of Pierce's disease and citrus variegated chlorosis strains of Xylella fastidiosa.</title>
        <authorList>
            <person name="Van Sluys M.A."/>
            <person name="de Oliveira M.C."/>
            <person name="Monteiro-Vitorello C.B."/>
            <person name="Miyaki C.Y."/>
            <person name="Furlan L.R."/>
            <person name="Camargo L.E.A."/>
            <person name="da Silva A.C.R."/>
            <person name="Moon D.H."/>
            <person name="Takita M.A."/>
            <person name="Lemos E.G.M."/>
            <person name="Machado M.A."/>
            <person name="Ferro M.I.T."/>
            <person name="da Silva F.R."/>
            <person name="Goldman M.H.S."/>
            <person name="Goldman G.H."/>
            <person name="Lemos M.V.F."/>
            <person name="El-Dorry H."/>
            <person name="Tsai S.M."/>
            <person name="Carrer H."/>
            <person name="Carraro D.M."/>
            <person name="de Oliveira R.C."/>
            <person name="Nunes L.R."/>
            <person name="Siqueira W.J."/>
            <person name="Coutinho L.L."/>
            <person name="Kimura E.T."/>
            <person name="Ferro E.S."/>
            <person name="Harakava R."/>
            <person name="Kuramae E.E."/>
            <person name="Marino C.L."/>
            <person name="Giglioti E."/>
            <person name="Abreu I.L."/>
            <person name="Alves L.M.C."/>
            <person name="do Amaral A.M."/>
            <person name="Baia G.S."/>
            <person name="Blanco S.R."/>
            <person name="Brito M.S."/>
            <person name="Cannavan F.S."/>
            <person name="Celestino A.V."/>
            <person name="da Cunha A.F."/>
            <person name="Fenille R.C."/>
            <person name="Ferro J.A."/>
            <person name="Formighieri E.F."/>
            <person name="Kishi L.T."/>
            <person name="Leoni S.G."/>
            <person name="Oliveira A.R."/>
            <person name="Rosa V.E. Jr."/>
            <person name="Sassaki F.T."/>
            <person name="Sena J.A.D."/>
            <person name="de Souza A.A."/>
            <person name="Truffi D."/>
            <person name="Tsukumo F."/>
            <person name="Yanai G.M."/>
            <person name="Zaros L.G."/>
            <person name="Civerolo E.L."/>
            <person name="Simpson A.J.G."/>
            <person name="Almeida N.F. Jr."/>
            <person name="Setubal J.C."/>
            <person name="Kitajima J.P."/>
        </authorList>
    </citation>
    <scope>NUCLEOTIDE SEQUENCE [LARGE SCALE GENOMIC DNA]</scope>
    <source>
        <strain>Temecula1 / ATCC 700964</strain>
    </source>
</reference>
<accession>Q87A92</accession>
<sequence length="354" mass="37927">MHHPLPPDDTLYDQVRPILWTGHFLKLLDQRKLPFVVEYVECHSSEDVTQAIRTLIVRGAPAIGIVAGWGAVLAAREIEAVDGIEALCKLEPALQRLHAARPTAVNLAWVLARMRRTLSAAHADWRQVMECEAESIAREDLTANRCMGAYGAALIPIGSGVLTHCNTGSLATAGFGTALGVIRDGIAQGRIARVFVGETRPWLQGARLTVWELQQDGIDATLIADSAAAHLMKSGQVQWVIVGADRICANGDTANKIGTYQLAITARHHGVKFMVVASAATVDMDTVAGEAIEIEQRDPEELLGVSGVRTVAEGIAAWNPVFDVTPGALIDAIVTERGVIQSPDAAQMRATFGN</sequence>
<organism>
    <name type="scientific">Xylella fastidiosa (strain Temecula1 / ATCC 700964)</name>
    <dbReference type="NCBI Taxonomy" id="183190"/>
    <lineage>
        <taxon>Bacteria</taxon>
        <taxon>Pseudomonadati</taxon>
        <taxon>Pseudomonadota</taxon>
        <taxon>Gammaproteobacteria</taxon>
        <taxon>Lysobacterales</taxon>
        <taxon>Lysobacteraceae</taxon>
        <taxon>Xylella</taxon>
    </lineage>
</organism>
<evidence type="ECO:0000255" key="1">
    <source>
        <dbReference type="HAMAP-Rule" id="MF_01678"/>
    </source>
</evidence>
<evidence type="ECO:0000305" key="2"/>
<dbReference type="EC" id="5.3.1.23" evidence="1"/>
<dbReference type="EMBL" id="AE009442">
    <property type="protein sequence ID" value="AAO29766.1"/>
    <property type="molecule type" value="Genomic_DNA"/>
</dbReference>
<dbReference type="RefSeq" id="WP_004090360.1">
    <property type="nucleotide sequence ID" value="NC_004556.1"/>
</dbReference>
<dbReference type="SMR" id="Q87A92"/>
<dbReference type="GeneID" id="93905797"/>
<dbReference type="KEGG" id="xft:PD_1936"/>
<dbReference type="HOGENOM" id="CLU_016218_1_2_6"/>
<dbReference type="UniPathway" id="UPA00904">
    <property type="reaction ID" value="UER00874"/>
</dbReference>
<dbReference type="Proteomes" id="UP000002516">
    <property type="component" value="Chromosome"/>
</dbReference>
<dbReference type="GO" id="GO:0046523">
    <property type="term" value="F:S-methyl-5-thioribose-1-phosphate isomerase activity"/>
    <property type="evidence" value="ECO:0007669"/>
    <property type="project" value="UniProtKB-UniRule"/>
</dbReference>
<dbReference type="GO" id="GO:0019509">
    <property type="term" value="P:L-methionine salvage from methylthioadenosine"/>
    <property type="evidence" value="ECO:0007669"/>
    <property type="project" value="UniProtKB-UniRule"/>
</dbReference>
<dbReference type="FunFam" id="1.20.120.420:FF:000003">
    <property type="entry name" value="Methylthioribose-1-phosphate isomerase"/>
    <property type="match status" value="1"/>
</dbReference>
<dbReference type="FunFam" id="3.40.50.10470:FF:000006">
    <property type="entry name" value="Methylthioribose-1-phosphate isomerase"/>
    <property type="match status" value="1"/>
</dbReference>
<dbReference type="Gene3D" id="1.20.120.420">
    <property type="entry name" value="translation initiation factor eif-2b, domain 1"/>
    <property type="match status" value="1"/>
</dbReference>
<dbReference type="Gene3D" id="3.40.50.10470">
    <property type="entry name" value="Translation initiation factor eif-2b, domain 2"/>
    <property type="match status" value="1"/>
</dbReference>
<dbReference type="HAMAP" id="MF_01678">
    <property type="entry name" value="Salvage_MtnA"/>
    <property type="match status" value="1"/>
</dbReference>
<dbReference type="InterPro" id="IPR000649">
    <property type="entry name" value="IF-2B-related"/>
</dbReference>
<dbReference type="InterPro" id="IPR005251">
    <property type="entry name" value="IF-M1Pi"/>
</dbReference>
<dbReference type="InterPro" id="IPR042529">
    <property type="entry name" value="IF_2B-like_C"/>
</dbReference>
<dbReference type="InterPro" id="IPR011559">
    <property type="entry name" value="Initiation_fac_2B_a/b/d"/>
</dbReference>
<dbReference type="InterPro" id="IPR027363">
    <property type="entry name" value="M1Pi_N"/>
</dbReference>
<dbReference type="InterPro" id="IPR037171">
    <property type="entry name" value="NagB/RpiA_transferase-like"/>
</dbReference>
<dbReference type="NCBIfam" id="TIGR00524">
    <property type="entry name" value="eIF-2B_rel"/>
    <property type="match status" value="1"/>
</dbReference>
<dbReference type="NCBIfam" id="NF004326">
    <property type="entry name" value="PRK05720.1"/>
    <property type="match status" value="1"/>
</dbReference>
<dbReference type="NCBIfam" id="TIGR00512">
    <property type="entry name" value="salvage_mtnA"/>
    <property type="match status" value="1"/>
</dbReference>
<dbReference type="PANTHER" id="PTHR43475">
    <property type="entry name" value="METHYLTHIORIBOSE-1-PHOSPHATE ISOMERASE"/>
    <property type="match status" value="1"/>
</dbReference>
<dbReference type="PANTHER" id="PTHR43475:SF1">
    <property type="entry name" value="METHYLTHIORIBOSE-1-PHOSPHATE ISOMERASE"/>
    <property type="match status" value="1"/>
</dbReference>
<dbReference type="Pfam" id="PF01008">
    <property type="entry name" value="IF-2B"/>
    <property type="match status" value="1"/>
</dbReference>
<dbReference type="SUPFAM" id="SSF100950">
    <property type="entry name" value="NagB/RpiA/CoA transferase-like"/>
    <property type="match status" value="1"/>
</dbReference>
<protein>
    <recommendedName>
        <fullName evidence="1">Methylthioribose-1-phosphate isomerase</fullName>
        <shortName evidence="1">M1Pi</shortName>
        <shortName evidence="1">MTR-1-P isomerase</shortName>
        <ecNumber evidence="1">5.3.1.23</ecNumber>
    </recommendedName>
    <alternativeName>
        <fullName evidence="1">S-methyl-5-thioribose-1-phosphate isomerase</fullName>
    </alternativeName>
</protein>
<name>MTNA_XYLFT</name>